<organism>
    <name type="scientific">Methylococcus capsulatus (strain ATCC 33009 / NCIMB 11132 / Bath)</name>
    <dbReference type="NCBI Taxonomy" id="243233"/>
    <lineage>
        <taxon>Bacteria</taxon>
        <taxon>Pseudomonadati</taxon>
        <taxon>Pseudomonadota</taxon>
        <taxon>Gammaproteobacteria</taxon>
        <taxon>Methylococcales</taxon>
        <taxon>Methylococcaceae</taxon>
        <taxon>Methylococcus</taxon>
    </lineage>
</organism>
<gene>
    <name evidence="1" type="primary">pyrB</name>
    <name type="ordered locus">MCA2333</name>
</gene>
<evidence type="ECO:0000255" key="1">
    <source>
        <dbReference type="HAMAP-Rule" id="MF_00001"/>
    </source>
</evidence>
<keyword id="KW-0665">Pyrimidine biosynthesis</keyword>
<keyword id="KW-1185">Reference proteome</keyword>
<keyword id="KW-0808">Transferase</keyword>
<name>PYRB_METCA</name>
<dbReference type="EC" id="2.1.3.2" evidence="1"/>
<dbReference type="EMBL" id="AE017282">
    <property type="protein sequence ID" value="AAU91522.1"/>
    <property type="molecule type" value="Genomic_DNA"/>
</dbReference>
<dbReference type="RefSeq" id="WP_010961561.1">
    <property type="nucleotide sequence ID" value="NC_002977.6"/>
</dbReference>
<dbReference type="SMR" id="Q605F1"/>
<dbReference type="STRING" id="243233.MCA2333"/>
<dbReference type="GeneID" id="88224537"/>
<dbReference type="KEGG" id="mca:MCA2333"/>
<dbReference type="eggNOG" id="COG0540">
    <property type="taxonomic scope" value="Bacteria"/>
</dbReference>
<dbReference type="HOGENOM" id="CLU_043846_2_0_6"/>
<dbReference type="UniPathway" id="UPA00070">
    <property type="reaction ID" value="UER00116"/>
</dbReference>
<dbReference type="Proteomes" id="UP000006821">
    <property type="component" value="Chromosome"/>
</dbReference>
<dbReference type="GO" id="GO:0005829">
    <property type="term" value="C:cytosol"/>
    <property type="evidence" value="ECO:0007669"/>
    <property type="project" value="TreeGrafter"/>
</dbReference>
<dbReference type="GO" id="GO:0016597">
    <property type="term" value="F:amino acid binding"/>
    <property type="evidence" value="ECO:0007669"/>
    <property type="project" value="InterPro"/>
</dbReference>
<dbReference type="GO" id="GO:0004070">
    <property type="term" value="F:aspartate carbamoyltransferase activity"/>
    <property type="evidence" value="ECO:0007669"/>
    <property type="project" value="UniProtKB-UniRule"/>
</dbReference>
<dbReference type="GO" id="GO:0006207">
    <property type="term" value="P:'de novo' pyrimidine nucleobase biosynthetic process"/>
    <property type="evidence" value="ECO:0007669"/>
    <property type="project" value="InterPro"/>
</dbReference>
<dbReference type="GO" id="GO:0044205">
    <property type="term" value="P:'de novo' UMP biosynthetic process"/>
    <property type="evidence" value="ECO:0007669"/>
    <property type="project" value="UniProtKB-UniRule"/>
</dbReference>
<dbReference type="GO" id="GO:0006520">
    <property type="term" value="P:amino acid metabolic process"/>
    <property type="evidence" value="ECO:0007669"/>
    <property type="project" value="InterPro"/>
</dbReference>
<dbReference type="FunFam" id="3.40.50.1370:FF:000007">
    <property type="entry name" value="Aspartate carbamoyltransferase"/>
    <property type="match status" value="1"/>
</dbReference>
<dbReference type="Gene3D" id="3.40.50.1370">
    <property type="entry name" value="Aspartate/ornithine carbamoyltransferase"/>
    <property type="match status" value="2"/>
</dbReference>
<dbReference type="HAMAP" id="MF_00001">
    <property type="entry name" value="Asp_carb_tr"/>
    <property type="match status" value="1"/>
</dbReference>
<dbReference type="InterPro" id="IPR006132">
    <property type="entry name" value="Asp/Orn_carbamoyltranf_P-bd"/>
</dbReference>
<dbReference type="InterPro" id="IPR006130">
    <property type="entry name" value="Asp/Orn_carbamoylTrfase"/>
</dbReference>
<dbReference type="InterPro" id="IPR036901">
    <property type="entry name" value="Asp/Orn_carbamoylTrfase_sf"/>
</dbReference>
<dbReference type="InterPro" id="IPR002082">
    <property type="entry name" value="Asp_carbamoyltransf"/>
</dbReference>
<dbReference type="InterPro" id="IPR006131">
    <property type="entry name" value="Asp_carbamoyltransf_Asp/Orn-bd"/>
</dbReference>
<dbReference type="NCBIfam" id="TIGR00670">
    <property type="entry name" value="asp_carb_tr"/>
    <property type="match status" value="1"/>
</dbReference>
<dbReference type="NCBIfam" id="NF002032">
    <property type="entry name" value="PRK00856.1"/>
    <property type="match status" value="1"/>
</dbReference>
<dbReference type="PANTHER" id="PTHR45753:SF6">
    <property type="entry name" value="ASPARTATE CARBAMOYLTRANSFERASE"/>
    <property type="match status" value="1"/>
</dbReference>
<dbReference type="PANTHER" id="PTHR45753">
    <property type="entry name" value="ORNITHINE CARBAMOYLTRANSFERASE, MITOCHONDRIAL"/>
    <property type="match status" value="1"/>
</dbReference>
<dbReference type="Pfam" id="PF00185">
    <property type="entry name" value="OTCace"/>
    <property type="match status" value="1"/>
</dbReference>
<dbReference type="Pfam" id="PF02729">
    <property type="entry name" value="OTCace_N"/>
    <property type="match status" value="1"/>
</dbReference>
<dbReference type="PRINTS" id="PR00100">
    <property type="entry name" value="AOTCASE"/>
</dbReference>
<dbReference type="PRINTS" id="PR00101">
    <property type="entry name" value="ATCASE"/>
</dbReference>
<dbReference type="SUPFAM" id="SSF53671">
    <property type="entry name" value="Aspartate/ornithine carbamoyltransferase"/>
    <property type="match status" value="1"/>
</dbReference>
<dbReference type="PROSITE" id="PS00097">
    <property type="entry name" value="CARBAMOYLTRANSFERASE"/>
    <property type="match status" value="1"/>
</dbReference>
<accession>Q605F1</accession>
<sequence>MSVTAAADIQLTASGRLRHFLTIEGLSRELLTRIMDTAESFAGVTAQNVKKVPLLRGKTVVNLFFENSTRTRTTFELAAKRLSADVLNINIATSATSKGESLLDTIRNLEAMHVDMFVVRHAQSGAAHFIARHVAPHISVLNAGDGRHAHPTQAMLDVFTIRRAKGGFAGLKVAIVGDILHSRVARSEIWALNTLGVDEVRVVAPKTLLPAHVEALGVVPYHDLNEGLRDVDVVIMLRLQLERMGSAFIPSEHEYFQRFGLTEKRLEKARPDVIVMHPGPINRGIEIDSAIADGPRSVILQQVTHGIAVRMAVMSMAMHAGPDLEVPV</sequence>
<reference key="1">
    <citation type="journal article" date="2004" name="PLoS Biol.">
        <title>Genomic insights into methanotrophy: the complete genome sequence of Methylococcus capsulatus (Bath).</title>
        <authorList>
            <person name="Ward N.L."/>
            <person name="Larsen O."/>
            <person name="Sakwa J."/>
            <person name="Bruseth L."/>
            <person name="Khouri H.M."/>
            <person name="Durkin A.S."/>
            <person name="Dimitrov G."/>
            <person name="Jiang L."/>
            <person name="Scanlan D."/>
            <person name="Kang K.H."/>
            <person name="Lewis M.R."/>
            <person name="Nelson K.E."/>
            <person name="Methe B.A."/>
            <person name="Wu M."/>
            <person name="Heidelberg J.F."/>
            <person name="Paulsen I.T."/>
            <person name="Fouts D.E."/>
            <person name="Ravel J."/>
            <person name="Tettelin H."/>
            <person name="Ren Q."/>
            <person name="Read T.D."/>
            <person name="DeBoy R.T."/>
            <person name="Seshadri R."/>
            <person name="Salzberg S.L."/>
            <person name="Jensen H.B."/>
            <person name="Birkeland N.K."/>
            <person name="Nelson W.C."/>
            <person name="Dodson R.J."/>
            <person name="Grindhaug S.H."/>
            <person name="Holt I.E."/>
            <person name="Eidhammer I."/>
            <person name="Jonasen I."/>
            <person name="Vanaken S."/>
            <person name="Utterback T.R."/>
            <person name="Feldblyum T.V."/>
            <person name="Fraser C.M."/>
            <person name="Lillehaug J.R."/>
            <person name="Eisen J.A."/>
        </authorList>
    </citation>
    <scope>NUCLEOTIDE SEQUENCE [LARGE SCALE GENOMIC DNA]</scope>
    <source>
        <strain>ATCC 33009 / NCIMB 11132 / Bath</strain>
    </source>
</reference>
<feature type="chain" id="PRO_0000113158" description="Aspartate carbamoyltransferase catalytic subunit">
    <location>
        <begin position="1"/>
        <end position="328"/>
    </location>
</feature>
<feature type="binding site" evidence="1">
    <location>
        <position position="70"/>
    </location>
    <ligand>
        <name>carbamoyl phosphate</name>
        <dbReference type="ChEBI" id="CHEBI:58228"/>
    </ligand>
</feature>
<feature type="binding site" evidence="1">
    <location>
        <position position="71"/>
    </location>
    <ligand>
        <name>carbamoyl phosphate</name>
        <dbReference type="ChEBI" id="CHEBI:58228"/>
    </ligand>
</feature>
<feature type="binding site" evidence="1">
    <location>
        <position position="98"/>
    </location>
    <ligand>
        <name>L-aspartate</name>
        <dbReference type="ChEBI" id="CHEBI:29991"/>
    </ligand>
</feature>
<feature type="binding site" evidence="1">
    <location>
        <position position="120"/>
    </location>
    <ligand>
        <name>carbamoyl phosphate</name>
        <dbReference type="ChEBI" id="CHEBI:58228"/>
    </ligand>
</feature>
<feature type="binding site" evidence="1">
    <location>
        <position position="150"/>
    </location>
    <ligand>
        <name>carbamoyl phosphate</name>
        <dbReference type="ChEBI" id="CHEBI:58228"/>
    </ligand>
</feature>
<feature type="binding site" evidence="1">
    <location>
        <position position="153"/>
    </location>
    <ligand>
        <name>carbamoyl phosphate</name>
        <dbReference type="ChEBI" id="CHEBI:58228"/>
    </ligand>
</feature>
<feature type="binding site" evidence="1">
    <location>
        <position position="183"/>
    </location>
    <ligand>
        <name>L-aspartate</name>
        <dbReference type="ChEBI" id="CHEBI:29991"/>
    </ligand>
</feature>
<feature type="binding site" evidence="1">
    <location>
        <position position="238"/>
    </location>
    <ligand>
        <name>L-aspartate</name>
        <dbReference type="ChEBI" id="CHEBI:29991"/>
    </ligand>
</feature>
<feature type="binding site" evidence="1">
    <location>
        <position position="279"/>
    </location>
    <ligand>
        <name>carbamoyl phosphate</name>
        <dbReference type="ChEBI" id="CHEBI:58228"/>
    </ligand>
</feature>
<feature type="binding site" evidence="1">
    <location>
        <position position="280"/>
    </location>
    <ligand>
        <name>carbamoyl phosphate</name>
        <dbReference type="ChEBI" id="CHEBI:58228"/>
    </ligand>
</feature>
<comment type="function">
    <text evidence="1">Catalyzes the condensation of carbamoyl phosphate and aspartate to form carbamoyl aspartate and inorganic phosphate, the committed step in the de novo pyrimidine nucleotide biosynthesis pathway.</text>
</comment>
<comment type="catalytic activity">
    <reaction evidence="1">
        <text>carbamoyl phosphate + L-aspartate = N-carbamoyl-L-aspartate + phosphate + H(+)</text>
        <dbReference type="Rhea" id="RHEA:20013"/>
        <dbReference type="ChEBI" id="CHEBI:15378"/>
        <dbReference type="ChEBI" id="CHEBI:29991"/>
        <dbReference type="ChEBI" id="CHEBI:32814"/>
        <dbReference type="ChEBI" id="CHEBI:43474"/>
        <dbReference type="ChEBI" id="CHEBI:58228"/>
        <dbReference type="EC" id="2.1.3.2"/>
    </reaction>
</comment>
<comment type="pathway">
    <text evidence="1">Pyrimidine metabolism; UMP biosynthesis via de novo pathway; (S)-dihydroorotate from bicarbonate: step 2/3.</text>
</comment>
<comment type="subunit">
    <text evidence="1">Heterododecamer (2C3:3R2) of six catalytic PyrB chains organized as two trimers (C3), and six regulatory PyrI chains organized as three dimers (R2).</text>
</comment>
<comment type="similarity">
    <text evidence="1">Belongs to the aspartate/ornithine carbamoyltransferase superfamily. ATCase family.</text>
</comment>
<protein>
    <recommendedName>
        <fullName evidence="1">Aspartate carbamoyltransferase catalytic subunit</fullName>
        <ecNumber evidence="1">2.1.3.2</ecNumber>
    </recommendedName>
    <alternativeName>
        <fullName evidence="1">Aspartate transcarbamylase</fullName>
        <shortName evidence="1">ATCase</shortName>
    </alternativeName>
</protein>
<proteinExistence type="inferred from homology"/>